<evidence type="ECO:0000255" key="1">
    <source>
        <dbReference type="HAMAP-Rule" id="MF_02004"/>
    </source>
</evidence>
<proteinExistence type="inferred from homology"/>
<keyword id="KW-0030">Aminoacyl-tRNA synthetase</keyword>
<keyword id="KW-0067">ATP-binding</keyword>
<keyword id="KW-0175">Coiled coil</keyword>
<keyword id="KW-0963">Cytoplasm</keyword>
<keyword id="KW-0436">Ligase</keyword>
<keyword id="KW-0547">Nucleotide-binding</keyword>
<keyword id="KW-0648">Protein biosynthesis</keyword>
<organism>
    <name type="scientific">Chlamydia abortus (strain DSM 27085 / S26/3)</name>
    <name type="common">Chlamydophila abortus</name>
    <dbReference type="NCBI Taxonomy" id="218497"/>
    <lineage>
        <taxon>Bacteria</taxon>
        <taxon>Pseudomonadati</taxon>
        <taxon>Chlamydiota</taxon>
        <taxon>Chlamydiia</taxon>
        <taxon>Chlamydiales</taxon>
        <taxon>Chlamydiaceae</taxon>
        <taxon>Chlamydia/Chlamydophila group</taxon>
        <taxon>Chlamydia</taxon>
    </lineage>
</organism>
<dbReference type="EC" id="6.1.1.9" evidence="1"/>
<dbReference type="EMBL" id="CR848038">
    <property type="protein sequence ID" value="CAH64095.1"/>
    <property type="molecule type" value="Genomic_DNA"/>
</dbReference>
<dbReference type="RefSeq" id="WP_011097232.1">
    <property type="nucleotide sequence ID" value="NC_004552.2"/>
</dbReference>
<dbReference type="SMR" id="Q5L5J6"/>
<dbReference type="KEGG" id="cab:CAB648"/>
<dbReference type="eggNOG" id="COG0525">
    <property type="taxonomic scope" value="Bacteria"/>
</dbReference>
<dbReference type="HOGENOM" id="CLU_001493_0_2_0"/>
<dbReference type="OrthoDB" id="9810365at2"/>
<dbReference type="Proteomes" id="UP000001012">
    <property type="component" value="Chromosome"/>
</dbReference>
<dbReference type="GO" id="GO:0005829">
    <property type="term" value="C:cytosol"/>
    <property type="evidence" value="ECO:0007669"/>
    <property type="project" value="TreeGrafter"/>
</dbReference>
<dbReference type="GO" id="GO:0002161">
    <property type="term" value="F:aminoacyl-tRNA deacylase activity"/>
    <property type="evidence" value="ECO:0007669"/>
    <property type="project" value="InterPro"/>
</dbReference>
<dbReference type="GO" id="GO:0005524">
    <property type="term" value="F:ATP binding"/>
    <property type="evidence" value="ECO:0007669"/>
    <property type="project" value="UniProtKB-UniRule"/>
</dbReference>
<dbReference type="GO" id="GO:0004832">
    <property type="term" value="F:valine-tRNA ligase activity"/>
    <property type="evidence" value="ECO:0007669"/>
    <property type="project" value="UniProtKB-UniRule"/>
</dbReference>
<dbReference type="GO" id="GO:0006438">
    <property type="term" value="P:valyl-tRNA aminoacylation"/>
    <property type="evidence" value="ECO:0007669"/>
    <property type="project" value="UniProtKB-UniRule"/>
</dbReference>
<dbReference type="CDD" id="cd07962">
    <property type="entry name" value="Anticodon_Ia_Val"/>
    <property type="match status" value="1"/>
</dbReference>
<dbReference type="CDD" id="cd00817">
    <property type="entry name" value="ValRS_core"/>
    <property type="match status" value="1"/>
</dbReference>
<dbReference type="FunFam" id="3.40.50.620:FF:000032">
    <property type="entry name" value="Valine--tRNA ligase"/>
    <property type="match status" value="1"/>
</dbReference>
<dbReference type="FunFam" id="3.40.50.620:FF:000306">
    <property type="entry name" value="Valine--tRNA ligase"/>
    <property type="match status" value="1"/>
</dbReference>
<dbReference type="FunFam" id="3.90.740.10:FF:000010">
    <property type="entry name" value="Valine--tRNA ligase"/>
    <property type="match status" value="1"/>
</dbReference>
<dbReference type="Gene3D" id="3.40.50.620">
    <property type="entry name" value="HUPs"/>
    <property type="match status" value="2"/>
</dbReference>
<dbReference type="Gene3D" id="1.10.730.10">
    <property type="entry name" value="Isoleucyl-tRNA Synthetase, Domain 1"/>
    <property type="match status" value="1"/>
</dbReference>
<dbReference type="Gene3D" id="1.10.287.380">
    <property type="entry name" value="Valyl-tRNA synthetase, C-terminal domain"/>
    <property type="match status" value="1"/>
</dbReference>
<dbReference type="Gene3D" id="3.90.740.10">
    <property type="entry name" value="Valyl/Leucyl/Isoleucyl-tRNA synthetase, editing domain"/>
    <property type="match status" value="1"/>
</dbReference>
<dbReference type="HAMAP" id="MF_02004">
    <property type="entry name" value="Val_tRNA_synth_type1"/>
    <property type="match status" value="1"/>
</dbReference>
<dbReference type="InterPro" id="IPR001412">
    <property type="entry name" value="aa-tRNA-synth_I_CS"/>
</dbReference>
<dbReference type="InterPro" id="IPR002300">
    <property type="entry name" value="aa-tRNA-synth_Ia"/>
</dbReference>
<dbReference type="InterPro" id="IPR033705">
    <property type="entry name" value="Anticodon_Ia_Val"/>
</dbReference>
<dbReference type="InterPro" id="IPR013155">
    <property type="entry name" value="M/V/L/I-tRNA-synth_anticd-bd"/>
</dbReference>
<dbReference type="InterPro" id="IPR014729">
    <property type="entry name" value="Rossmann-like_a/b/a_fold"/>
</dbReference>
<dbReference type="InterPro" id="IPR010978">
    <property type="entry name" value="tRNA-bd_arm"/>
</dbReference>
<dbReference type="InterPro" id="IPR009080">
    <property type="entry name" value="tRNAsynth_Ia_anticodon-bd"/>
</dbReference>
<dbReference type="InterPro" id="IPR037118">
    <property type="entry name" value="Val-tRNA_synth_C_sf"/>
</dbReference>
<dbReference type="InterPro" id="IPR009008">
    <property type="entry name" value="Val/Leu/Ile-tRNA-synth_edit"/>
</dbReference>
<dbReference type="InterPro" id="IPR002303">
    <property type="entry name" value="Valyl-tRNA_ligase"/>
</dbReference>
<dbReference type="NCBIfam" id="NF004349">
    <property type="entry name" value="PRK05729.1"/>
    <property type="match status" value="1"/>
</dbReference>
<dbReference type="NCBIfam" id="TIGR00422">
    <property type="entry name" value="valS"/>
    <property type="match status" value="1"/>
</dbReference>
<dbReference type="PANTHER" id="PTHR11946:SF93">
    <property type="entry name" value="VALINE--TRNA LIGASE, CHLOROPLASTIC_MITOCHONDRIAL 2"/>
    <property type="match status" value="1"/>
</dbReference>
<dbReference type="PANTHER" id="PTHR11946">
    <property type="entry name" value="VALYL-TRNA SYNTHETASES"/>
    <property type="match status" value="1"/>
</dbReference>
<dbReference type="Pfam" id="PF08264">
    <property type="entry name" value="Anticodon_1"/>
    <property type="match status" value="1"/>
</dbReference>
<dbReference type="Pfam" id="PF00133">
    <property type="entry name" value="tRNA-synt_1"/>
    <property type="match status" value="2"/>
</dbReference>
<dbReference type="PRINTS" id="PR00986">
    <property type="entry name" value="TRNASYNTHVAL"/>
</dbReference>
<dbReference type="SUPFAM" id="SSF47323">
    <property type="entry name" value="Anticodon-binding domain of a subclass of class I aminoacyl-tRNA synthetases"/>
    <property type="match status" value="1"/>
</dbReference>
<dbReference type="SUPFAM" id="SSF52374">
    <property type="entry name" value="Nucleotidylyl transferase"/>
    <property type="match status" value="1"/>
</dbReference>
<dbReference type="SUPFAM" id="SSF46589">
    <property type="entry name" value="tRNA-binding arm"/>
    <property type="match status" value="1"/>
</dbReference>
<dbReference type="SUPFAM" id="SSF50677">
    <property type="entry name" value="ValRS/IleRS/LeuRS editing domain"/>
    <property type="match status" value="1"/>
</dbReference>
<dbReference type="PROSITE" id="PS00178">
    <property type="entry name" value="AA_TRNA_LIGASE_I"/>
    <property type="match status" value="1"/>
</dbReference>
<protein>
    <recommendedName>
        <fullName evidence="1">Valine--tRNA ligase</fullName>
        <ecNumber evidence="1">6.1.1.9</ecNumber>
    </recommendedName>
    <alternativeName>
        <fullName evidence="1">Valyl-tRNA synthetase</fullName>
        <shortName evidence="1">ValRS</shortName>
    </alternativeName>
</protein>
<comment type="function">
    <text evidence="1">Catalyzes the attachment of valine to tRNA(Val). As ValRS can inadvertently accommodate and process structurally similar amino acids such as threonine, to avoid such errors, it has a 'posttransfer' editing activity that hydrolyzes mischarged Thr-tRNA(Val) in a tRNA-dependent manner.</text>
</comment>
<comment type="catalytic activity">
    <reaction evidence="1">
        <text>tRNA(Val) + L-valine + ATP = L-valyl-tRNA(Val) + AMP + diphosphate</text>
        <dbReference type="Rhea" id="RHEA:10704"/>
        <dbReference type="Rhea" id="RHEA-COMP:9672"/>
        <dbReference type="Rhea" id="RHEA-COMP:9708"/>
        <dbReference type="ChEBI" id="CHEBI:30616"/>
        <dbReference type="ChEBI" id="CHEBI:33019"/>
        <dbReference type="ChEBI" id="CHEBI:57762"/>
        <dbReference type="ChEBI" id="CHEBI:78442"/>
        <dbReference type="ChEBI" id="CHEBI:78537"/>
        <dbReference type="ChEBI" id="CHEBI:456215"/>
        <dbReference type="EC" id="6.1.1.9"/>
    </reaction>
</comment>
<comment type="subunit">
    <text evidence="1">Monomer.</text>
</comment>
<comment type="subcellular location">
    <subcellularLocation>
        <location evidence="1">Cytoplasm</location>
    </subcellularLocation>
</comment>
<comment type="domain">
    <text evidence="1">ValRS has two distinct active sites: one for aminoacylation and one for editing. The misactivated threonine is translocated from the active site to the editing site.</text>
</comment>
<comment type="domain">
    <text evidence="1">The C-terminal coiled-coil domain is crucial for aminoacylation activity.</text>
</comment>
<comment type="similarity">
    <text evidence="1">Belongs to the class-I aminoacyl-tRNA synthetase family. ValS type 1 subfamily.</text>
</comment>
<feature type="chain" id="PRO_0000224457" description="Valine--tRNA ligase">
    <location>
        <begin position="1"/>
        <end position="940"/>
    </location>
</feature>
<feature type="coiled-coil region" evidence="1">
    <location>
        <begin position="873"/>
        <end position="937"/>
    </location>
</feature>
<feature type="short sequence motif" description="'HIGH' region">
    <location>
        <begin position="47"/>
        <end position="57"/>
    </location>
</feature>
<feature type="short sequence motif" description="'KMSKS' region">
    <location>
        <begin position="564"/>
        <end position="568"/>
    </location>
</feature>
<feature type="binding site" evidence="1">
    <location>
        <position position="567"/>
    </location>
    <ligand>
        <name>ATP</name>
        <dbReference type="ChEBI" id="CHEBI:30616"/>
    </ligand>
</feature>
<reference key="1">
    <citation type="journal article" date="2005" name="Genome Res.">
        <title>The Chlamydophila abortus genome sequence reveals an array of variable proteins that contribute to interspecies variation.</title>
        <authorList>
            <person name="Thomson N.R."/>
            <person name="Yeats C."/>
            <person name="Bell K."/>
            <person name="Holden M.T.G."/>
            <person name="Bentley S.D."/>
            <person name="Livingstone M."/>
            <person name="Cerdeno-Tarraga A.-M."/>
            <person name="Harris B."/>
            <person name="Doggett J."/>
            <person name="Ormond D."/>
            <person name="Mungall K."/>
            <person name="Clarke K."/>
            <person name="Feltwell T."/>
            <person name="Hance Z."/>
            <person name="Sanders M."/>
            <person name="Quail M.A."/>
            <person name="Price C."/>
            <person name="Barrell B.G."/>
            <person name="Parkhill J."/>
            <person name="Longbottom D."/>
        </authorList>
    </citation>
    <scope>NUCLEOTIDE SEQUENCE [LARGE SCALE GENOMIC DNA]</scope>
    <source>
        <strain>DSM 27085 / S26/3</strain>
    </source>
</reference>
<sequence>MEEDAFPKAYDPKGLEEKLYAFWEESTMFTAQAASDKPPYAIIMPPPNVTGILHMGHALVNTLQDVLIRYKRMSGFEVCWVPGTDHAGIATQTVVERHLYSSLGKRRVDFSREEFLEHVWQWKEKSEGVILSQLRQLGCSCDWSRLRFTMEPLANRAVKKAFKILFDKGHIYRGNYLVNWDPVLQTALADDEVEYEEKDGWLYYIRYRVVGSSEHIVVATTRPETLLGDTAIAISPDDERYSHLLGAKVHLPFVDREIPIIADMSVDPLFGTGAVKITPAHDKDDYRTGMHHNLPMINILTPTGEINENGGIFAGLSKEKARESIITALETLGLFVKKEPYKLRVGVSYRSGAVIEPYLSKQWFVSVDSFRDSLREFVASDAIKIFPPEFTKNYLTWVNNLRDWCISRQLWWGHRIPVWYHKSDAHRMLCYDGEGIPEEVAKDPESWEQDPDVLDTWFSSGLWPLTCLGWPDSECGDLEKFYPTAVLVTGHDILFFWVTRMVLLCSAMVGKKPFSDVFLHGLIFGKSYKRYNDLGEWTYITGEEKYAYDMGKALPKGVIAKWEKLSKSKGNVIDPLEMIAKYGADAVRMALCSCANRGEQIDLDYRLFEEYKNFANKIWNGARFIFSHISNLTSQDLARGIDTTLLGLEDYYILDGFNRLLKELHSAYQNYAFDKITTMAYEFFRNNFCSTYIEIIKPTLYGKQRSKEDQLTKQKLLAVLLVNILGVLHPIAPFVTETLFLKLKEVIGEIKEECSDAITAHALAMLRADSYVVAPYPQSIDIVIPEHLHESFALAERLVYTVRNIRGEMQLDSRASLEVFVICPEGVSIETYVPMVCALGGISSIENLTEEPKDRIYSLGVVEGIRLGVFVPVEHIAKEKTRLEKEKTRLENAIESASRLLSSESFRAKANPDLVCAKEEALKNNRIELQSILDKLASFS</sequence>
<accession>Q5L5J6</accession>
<name>SYV_CHLAB</name>
<gene>
    <name evidence="1" type="primary">valS</name>
    <name type="ordered locus">CAB648</name>
</gene>